<gene>
    <name evidence="1" type="primary">fni</name>
    <name type="ordered locus">SSP0556</name>
</gene>
<dbReference type="EC" id="5.3.3.2" evidence="1"/>
<dbReference type="EMBL" id="AP008934">
    <property type="protein sequence ID" value="BAE17701.1"/>
    <property type="molecule type" value="Genomic_DNA"/>
</dbReference>
<dbReference type="RefSeq" id="WP_011302505.1">
    <property type="nucleotide sequence ID" value="NZ_MTGA01000036.1"/>
</dbReference>
<dbReference type="SMR" id="Q49ZS3"/>
<dbReference type="GeneID" id="3616849"/>
<dbReference type="KEGG" id="ssp:SSP0556"/>
<dbReference type="PATRIC" id="fig|342451.11.peg.561"/>
<dbReference type="eggNOG" id="COG1304">
    <property type="taxonomic scope" value="Bacteria"/>
</dbReference>
<dbReference type="HOGENOM" id="CLU_065515_0_0_9"/>
<dbReference type="OrthoDB" id="9795032at2"/>
<dbReference type="Proteomes" id="UP000006371">
    <property type="component" value="Chromosome"/>
</dbReference>
<dbReference type="GO" id="GO:0005737">
    <property type="term" value="C:cytoplasm"/>
    <property type="evidence" value="ECO:0007669"/>
    <property type="project" value="UniProtKB-SubCell"/>
</dbReference>
<dbReference type="GO" id="GO:0010181">
    <property type="term" value="F:FMN binding"/>
    <property type="evidence" value="ECO:0007669"/>
    <property type="project" value="UniProtKB-UniRule"/>
</dbReference>
<dbReference type="GO" id="GO:0004452">
    <property type="term" value="F:isopentenyl-diphosphate delta-isomerase activity"/>
    <property type="evidence" value="ECO:0007669"/>
    <property type="project" value="UniProtKB-UniRule"/>
</dbReference>
<dbReference type="GO" id="GO:0000287">
    <property type="term" value="F:magnesium ion binding"/>
    <property type="evidence" value="ECO:0007669"/>
    <property type="project" value="UniProtKB-UniRule"/>
</dbReference>
<dbReference type="GO" id="GO:0070402">
    <property type="term" value="F:NADPH binding"/>
    <property type="evidence" value="ECO:0007669"/>
    <property type="project" value="UniProtKB-UniRule"/>
</dbReference>
<dbReference type="GO" id="GO:0016491">
    <property type="term" value="F:oxidoreductase activity"/>
    <property type="evidence" value="ECO:0007669"/>
    <property type="project" value="InterPro"/>
</dbReference>
<dbReference type="GO" id="GO:0008299">
    <property type="term" value="P:isoprenoid biosynthetic process"/>
    <property type="evidence" value="ECO:0007669"/>
    <property type="project" value="UniProtKB-UniRule"/>
</dbReference>
<dbReference type="CDD" id="cd02811">
    <property type="entry name" value="IDI-2_FMN"/>
    <property type="match status" value="1"/>
</dbReference>
<dbReference type="Gene3D" id="3.20.20.70">
    <property type="entry name" value="Aldolase class I"/>
    <property type="match status" value="1"/>
</dbReference>
<dbReference type="HAMAP" id="MF_00354">
    <property type="entry name" value="Idi_2"/>
    <property type="match status" value="1"/>
</dbReference>
<dbReference type="InterPro" id="IPR013785">
    <property type="entry name" value="Aldolase_TIM"/>
</dbReference>
<dbReference type="InterPro" id="IPR000262">
    <property type="entry name" value="FMN-dep_DH"/>
</dbReference>
<dbReference type="InterPro" id="IPR011179">
    <property type="entry name" value="IPdP_isomerase"/>
</dbReference>
<dbReference type="NCBIfam" id="TIGR02151">
    <property type="entry name" value="IPP_isom_2"/>
    <property type="match status" value="1"/>
</dbReference>
<dbReference type="PANTHER" id="PTHR43665">
    <property type="entry name" value="ISOPENTENYL-DIPHOSPHATE DELTA-ISOMERASE"/>
    <property type="match status" value="1"/>
</dbReference>
<dbReference type="PANTHER" id="PTHR43665:SF1">
    <property type="entry name" value="ISOPENTENYL-DIPHOSPHATE DELTA-ISOMERASE"/>
    <property type="match status" value="1"/>
</dbReference>
<dbReference type="Pfam" id="PF01070">
    <property type="entry name" value="FMN_dh"/>
    <property type="match status" value="1"/>
</dbReference>
<dbReference type="PIRSF" id="PIRSF003314">
    <property type="entry name" value="IPP_isomerase"/>
    <property type="match status" value="1"/>
</dbReference>
<dbReference type="SUPFAM" id="SSF51395">
    <property type="entry name" value="FMN-linked oxidoreductases"/>
    <property type="match status" value="1"/>
</dbReference>
<accession>Q49ZS3</accession>
<keyword id="KW-0963">Cytoplasm</keyword>
<keyword id="KW-0285">Flavoprotein</keyword>
<keyword id="KW-0288">FMN</keyword>
<keyword id="KW-0413">Isomerase</keyword>
<keyword id="KW-0414">Isoprene biosynthesis</keyword>
<keyword id="KW-0460">Magnesium</keyword>
<keyword id="KW-0479">Metal-binding</keyword>
<keyword id="KW-0521">NADP</keyword>
<keyword id="KW-1185">Reference proteome</keyword>
<organism>
    <name type="scientific">Staphylococcus saprophyticus subsp. saprophyticus (strain ATCC 15305 / DSM 20229 / NCIMB 8711 / NCTC 7292 / S-41)</name>
    <dbReference type="NCBI Taxonomy" id="342451"/>
    <lineage>
        <taxon>Bacteria</taxon>
        <taxon>Bacillati</taxon>
        <taxon>Bacillota</taxon>
        <taxon>Bacilli</taxon>
        <taxon>Bacillales</taxon>
        <taxon>Staphylococcaceae</taxon>
        <taxon>Staphylococcus</taxon>
    </lineage>
</organism>
<feature type="chain" id="PRO_0000229512" description="Isopentenyl-diphosphate delta-isomerase">
    <location>
        <begin position="1"/>
        <end position="347"/>
    </location>
</feature>
<feature type="binding site" evidence="1">
    <location>
        <begin position="9"/>
        <end position="10"/>
    </location>
    <ligand>
        <name>substrate</name>
    </ligand>
</feature>
<feature type="binding site" evidence="1">
    <location>
        <begin position="65"/>
        <end position="67"/>
    </location>
    <ligand>
        <name>FMN</name>
        <dbReference type="ChEBI" id="CHEBI:58210"/>
    </ligand>
</feature>
<feature type="binding site" evidence="1">
    <location>
        <begin position="95"/>
        <end position="97"/>
    </location>
    <ligand>
        <name>substrate</name>
    </ligand>
</feature>
<feature type="binding site" evidence="1">
    <location>
        <position position="95"/>
    </location>
    <ligand>
        <name>FMN</name>
        <dbReference type="ChEBI" id="CHEBI:58210"/>
    </ligand>
</feature>
<feature type="binding site" evidence="1">
    <location>
        <position position="124"/>
    </location>
    <ligand>
        <name>FMN</name>
        <dbReference type="ChEBI" id="CHEBI:58210"/>
    </ligand>
</feature>
<feature type="binding site" evidence="1">
    <location>
        <position position="154"/>
    </location>
    <ligand>
        <name>substrate</name>
    </ligand>
</feature>
<feature type="binding site" evidence="1">
    <location>
        <position position="155"/>
    </location>
    <ligand>
        <name>Mg(2+)</name>
        <dbReference type="ChEBI" id="CHEBI:18420"/>
    </ligand>
</feature>
<feature type="binding site" evidence="1">
    <location>
        <position position="186"/>
    </location>
    <ligand>
        <name>FMN</name>
        <dbReference type="ChEBI" id="CHEBI:58210"/>
    </ligand>
</feature>
<feature type="binding site" evidence="1">
    <location>
        <position position="211"/>
    </location>
    <ligand>
        <name>FMN</name>
        <dbReference type="ChEBI" id="CHEBI:58210"/>
    </ligand>
</feature>
<feature type="binding site" evidence="1">
    <location>
        <position position="216"/>
    </location>
    <ligand>
        <name>FMN</name>
        <dbReference type="ChEBI" id="CHEBI:58210"/>
    </ligand>
</feature>
<feature type="binding site" evidence="1">
    <location>
        <begin position="262"/>
        <end position="264"/>
    </location>
    <ligand>
        <name>FMN</name>
        <dbReference type="ChEBI" id="CHEBI:58210"/>
    </ligand>
</feature>
<feature type="binding site" evidence="1">
    <location>
        <begin position="283"/>
        <end position="284"/>
    </location>
    <ligand>
        <name>FMN</name>
        <dbReference type="ChEBI" id="CHEBI:58210"/>
    </ligand>
</feature>
<comment type="function">
    <text evidence="1">Involved in the biosynthesis of isoprenoids. Catalyzes the 1,3-allylic rearrangement of the homoallylic substrate isopentenyl (IPP) to its allylic isomer, dimethylallyl diphosphate (DMAPP).</text>
</comment>
<comment type="catalytic activity">
    <reaction evidence="1">
        <text>isopentenyl diphosphate = dimethylallyl diphosphate</text>
        <dbReference type="Rhea" id="RHEA:23284"/>
        <dbReference type="ChEBI" id="CHEBI:57623"/>
        <dbReference type="ChEBI" id="CHEBI:128769"/>
        <dbReference type="EC" id="5.3.3.2"/>
    </reaction>
</comment>
<comment type="cofactor">
    <cofactor evidence="1">
        <name>FMN</name>
        <dbReference type="ChEBI" id="CHEBI:58210"/>
    </cofactor>
</comment>
<comment type="cofactor">
    <cofactor evidence="1">
        <name>NADPH</name>
        <dbReference type="ChEBI" id="CHEBI:57783"/>
    </cofactor>
</comment>
<comment type="cofactor">
    <cofactor evidence="1">
        <name>Mg(2+)</name>
        <dbReference type="ChEBI" id="CHEBI:18420"/>
    </cofactor>
</comment>
<comment type="subunit">
    <text evidence="1">Homooctamer. Dimer of tetramers.</text>
</comment>
<comment type="subcellular location">
    <subcellularLocation>
        <location evidence="1">Cytoplasm</location>
    </subcellularLocation>
</comment>
<comment type="similarity">
    <text evidence="1">Belongs to the IPP isomerase type 2 family.</text>
</comment>
<proteinExistence type="inferred from homology"/>
<evidence type="ECO:0000255" key="1">
    <source>
        <dbReference type="HAMAP-Rule" id="MF_00354"/>
    </source>
</evidence>
<sequence>MSDNKREQRKNEHVEIAMAQGDATISDFDEIRFVHHSIPSVDVDDIDLTSQLKDFTLDQPLYINAMTGGSEWTKQINEKLAVIARETGIAMAVGSTHAALRNSKMASSFSIVRDTNPNGIIFSNVGADVPVDKAVESVKLLDAQALQVHVNAPQELVMPEGNRTFSTWMENLAQIVSRVDVPVIVKEVGFGMSKETIKSLNEIGVRYVDVSGRGGTNFVDIENERRTYKDMDYLGLWGQTTVESLLESASYQQDMDILASGGVRTPLDAVKCLALGASAVGMSRPFLNQVENYGITETLNYTEQFTDHMKKIMTMLDVKTIKDLKQTQMVFSPKLQSWIEQRGLDIR</sequence>
<protein>
    <recommendedName>
        <fullName evidence="1">Isopentenyl-diphosphate delta-isomerase</fullName>
        <shortName evidence="1">IPP isomerase</shortName>
        <ecNumber evidence="1">5.3.3.2</ecNumber>
    </recommendedName>
    <alternativeName>
        <fullName evidence="1">Isopentenyl diphosphate:dimethylallyl diphosphate isomerase</fullName>
    </alternativeName>
    <alternativeName>
        <fullName evidence="1">Isopentenyl pyrophosphate isomerase</fullName>
    </alternativeName>
    <alternativeName>
        <fullName evidence="1">Type 2 isopentenyl diphosphate isomerase</fullName>
        <shortName evidence="1">IDI-2</shortName>
    </alternativeName>
</protein>
<name>IDI2_STAS1</name>
<reference key="1">
    <citation type="journal article" date="2005" name="Proc. Natl. Acad. Sci. U.S.A.">
        <title>Whole genome sequence of Staphylococcus saprophyticus reveals the pathogenesis of uncomplicated urinary tract infection.</title>
        <authorList>
            <person name="Kuroda M."/>
            <person name="Yamashita A."/>
            <person name="Hirakawa H."/>
            <person name="Kumano M."/>
            <person name="Morikawa K."/>
            <person name="Higashide M."/>
            <person name="Maruyama A."/>
            <person name="Inose Y."/>
            <person name="Matoba K."/>
            <person name="Toh H."/>
            <person name="Kuhara S."/>
            <person name="Hattori M."/>
            <person name="Ohta T."/>
        </authorList>
    </citation>
    <scope>NUCLEOTIDE SEQUENCE [LARGE SCALE GENOMIC DNA]</scope>
    <source>
        <strain>ATCC 15305 / DSM 20229 / NCIMB 8711 / NCTC 7292 / S-41</strain>
    </source>
</reference>